<organism>
    <name type="scientific">Amborella trichopoda</name>
    <dbReference type="NCBI Taxonomy" id="13333"/>
    <lineage>
        <taxon>Eukaryota</taxon>
        <taxon>Viridiplantae</taxon>
        <taxon>Streptophyta</taxon>
        <taxon>Embryophyta</taxon>
        <taxon>Tracheophyta</taxon>
        <taxon>Spermatophyta</taxon>
        <taxon>Magnoliopsida</taxon>
        <taxon>Amborellales</taxon>
        <taxon>Amborellaceae</taxon>
        <taxon>Amborella</taxon>
    </lineage>
</organism>
<evidence type="ECO:0000255" key="1">
    <source>
        <dbReference type="HAMAP-Rule" id="MF_00633"/>
    </source>
</evidence>
<sequence length="215" mass="24151">MSKVYDWFEERLEIQAIADDITSKYVPPHVNIFHCLGGITLTCFLVQVATGFAMTFYYRPTVTEAFASVQYIMTEVNFGWLIRSVHRWSASMMVLMMILHVFRVYLTGGFKKPRELTWVTGVVLAVLTASFGVTGYSLPRDQIGYWAVKIVTGVPEAIPIIGSPLVELLRGSASVGQSTLTRFYSLHTFVLPLLTAVFMLMHFPMIRKQGISGPL</sequence>
<name>CYB6_AMBTC</name>
<proteinExistence type="inferred from homology"/>
<dbReference type="EMBL" id="AJ506156">
    <property type="protein sequence ID" value="CAD45136.1"/>
    <property type="molecule type" value="Genomic_DNA"/>
</dbReference>
<dbReference type="RefSeq" id="NP_904128.1">
    <property type="nucleotide sequence ID" value="NC_005086.1"/>
</dbReference>
<dbReference type="SMR" id="Q70XX8"/>
<dbReference type="STRING" id="13333.Q70XX8"/>
<dbReference type="GeneID" id="2546614"/>
<dbReference type="KEGG" id="atr:2546614"/>
<dbReference type="OrthoDB" id="1663482at2759"/>
<dbReference type="Proteomes" id="UP000017836">
    <property type="component" value="Chloroplast"/>
</dbReference>
<dbReference type="GO" id="GO:0009535">
    <property type="term" value="C:chloroplast thylakoid membrane"/>
    <property type="evidence" value="ECO:0007669"/>
    <property type="project" value="UniProtKB-SubCell"/>
</dbReference>
<dbReference type="GO" id="GO:0016020">
    <property type="term" value="C:membrane"/>
    <property type="evidence" value="ECO:0000318"/>
    <property type="project" value="GO_Central"/>
</dbReference>
<dbReference type="GO" id="GO:0045158">
    <property type="term" value="F:electron transporter, transferring electrons within cytochrome b6/f complex of photosystem II activity"/>
    <property type="evidence" value="ECO:0007669"/>
    <property type="project" value="UniProtKB-UniRule"/>
</dbReference>
<dbReference type="GO" id="GO:0046872">
    <property type="term" value="F:metal ion binding"/>
    <property type="evidence" value="ECO:0007669"/>
    <property type="project" value="UniProtKB-KW"/>
</dbReference>
<dbReference type="GO" id="GO:0016491">
    <property type="term" value="F:oxidoreductase activity"/>
    <property type="evidence" value="ECO:0007669"/>
    <property type="project" value="InterPro"/>
</dbReference>
<dbReference type="GO" id="GO:0015979">
    <property type="term" value="P:photosynthesis"/>
    <property type="evidence" value="ECO:0007669"/>
    <property type="project" value="UniProtKB-UniRule"/>
</dbReference>
<dbReference type="GO" id="GO:0022904">
    <property type="term" value="P:respiratory electron transport chain"/>
    <property type="evidence" value="ECO:0007669"/>
    <property type="project" value="InterPro"/>
</dbReference>
<dbReference type="CDD" id="cd00284">
    <property type="entry name" value="Cytochrome_b_N"/>
    <property type="match status" value="1"/>
</dbReference>
<dbReference type="FunFam" id="1.20.810.10:FF:000001">
    <property type="entry name" value="Cytochrome b6"/>
    <property type="match status" value="1"/>
</dbReference>
<dbReference type="Gene3D" id="1.20.810.10">
    <property type="entry name" value="Cytochrome Bc1 Complex, Chain C"/>
    <property type="match status" value="1"/>
</dbReference>
<dbReference type="HAMAP" id="MF_00633">
    <property type="entry name" value="Cytb6_f_cytb6"/>
    <property type="match status" value="1"/>
</dbReference>
<dbReference type="InterPro" id="IPR005797">
    <property type="entry name" value="Cyt_b/b6_N"/>
</dbReference>
<dbReference type="InterPro" id="IPR023530">
    <property type="entry name" value="Cyt_B6_PetB"/>
</dbReference>
<dbReference type="InterPro" id="IPR027387">
    <property type="entry name" value="Cytb/b6-like_sf"/>
</dbReference>
<dbReference type="InterPro" id="IPR048259">
    <property type="entry name" value="Cytochrome_b_N_euk/bac"/>
</dbReference>
<dbReference type="InterPro" id="IPR016174">
    <property type="entry name" value="Di-haem_cyt_TM"/>
</dbReference>
<dbReference type="NCBIfam" id="NF002990">
    <property type="entry name" value="PRK03735.1"/>
    <property type="match status" value="1"/>
</dbReference>
<dbReference type="PANTHER" id="PTHR19271">
    <property type="entry name" value="CYTOCHROME B"/>
    <property type="match status" value="1"/>
</dbReference>
<dbReference type="PANTHER" id="PTHR19271:SF16">
    <property type="entry name" value="CYTOCHROME B"/>
    <property type="match status" value="1"/>
</dbReference>
<dbReference type="Pfam" id="PF00033">
    <property type="entry name" value="Cytochrome_B"/>
    <property type="match status" value="1"/>
</dbReference>
<dbReference type="PIRSF" id="PIRSF000032">
    <property type="entry name" value="Cytochrome_b6"/>
    <property type="match status" value="1"/>
</dbReference>
<dbReference type="SUPFAM" id="SSF81342">
    <property type="entry name" value="Transmembrane di-heme cytochromes"/>
    <property type="match status" value="1"/>
</dbReference>
<dbReference type="PROSITE" id="PS51002">
    <property type="entry name" value="CYTB_NTER"/>
    <property type="match status" value="1"/>
</dbReference>
<comment type="function">
    <text evidence="1">Component of the cytochrome b6-f complex, which mediates electron transfer between photosystem II (PSII) and photosystem I (PSI), cyclic electron flow around PSI, and state transitions.</text>
</comment>
<comment type="cofactor">
    <cofactor evidence="1">
        <name>heme b</name>
        <dbReference type="ChEBI" id="CHEBI:60344"/>
    </cofactor>
    <text evidence="1">Binds 2 heme b groups non-covalently with two histidine residues as axial ligands.</text>
</comment>
<comment type="cofactor">
    <cofactor evidence="1">
        <name>heme c</name>
        <dbReference type="ChEBI" id="CHEBI:61717"/>
    </cofactor>
    <text evidence="1">Binds one heme group covalently by a single cysteine link with no axial amino acid ligand. This heme was named heme ci.</text>
</comment>
<comment type="subunit">
    <text evidence="1">The 4 large subunits of the cytochrome b6-f complex are cytochrome b6, subunit IV (17 kDa polypeptide, PetD), cytochrome f and the Rieske protein, while the 4 small subunits are PetG, PetL, PetM and PetN. The complex functions as a dimer.</text>
</comment>
<comment type="subcellular location">
    <subcellularLocation>
        <location evidence="1">Plastid</location>
        <location evidence="1">Chloroplast thylakoid membrane</location>
        <topology evidence="1">Multi-pass membrane protein</topology>
    </subcellularLocation>
</comment>
<comment type="miscellaneous">
    <text evidence="1">Heme 1 (or BH or b566) is high-potential and absorbs at about 566 nm, and heme 2 (or BL or b562) is low-potential and absorbs at about 562 nm.</text>
</comment>
<comment type="similarity">
    <text evidence="1">Belongs to the cytochrome b family. PetB subfamily.</text>
</comment>
<keyword id="KW-0150">Chloroplast</keyword>
<keyword id="KW-0249">Electron transport</keyword>
<keyword id="KW-0349">Heme</keyword>
<keyword id="KW-0408">Iron</keyword>
<keyword id="KW-0472">Membrane</keyword>
<keyword id="KW-0479">Metal-binding</keyword>
<keyword id="KW-0602">Photosynthesis</keyword>
<keyword id="KW-0934">Plastid</keyword>
<keyword id="KW-1185">Reference proteome</keyword>
<keyword id="KW-0793">Thylakoid</keyword>
<keyword id="KW-0812">Transmembrane</keyword>
<keyword id="KW-1133">Transmembrane helix</keyword>
<keyword id="KW-0813">Transport</keyword>
<feature type="chain" id="PRO_0000061779" description="Cytochrome b6">
    <location>
        <begin position="1"/>
        <end position="215"/>
    </location>
</feature>
<feature type="transmembrane region" description="Helical" evidence="1">
    <location>
        <begin position="32"/>
        <end position="52"/>
    </location>
</feature>
<feature type="transmembrane region" description="Helical" evidence="1">
    <location>
        <begin position="90"/>
        <end position="110"/>
    </location>
</feature>
<feature type="transmembrane region" description="Helical" evidence="1">
    <location>
        <begin position="116"/>
        <end position="136"/>
    </location>
</feature>
<feature type="transmembrane region" description="Helical" evidence="1">
    <location>
        <begin position="186"/>
        <end position="206"/>
    </location>
</feature>
<feature type="binding site" description="covalent" evidence="1">
    <location>
        <position position="35"/>
    </location>
    <ligand>
        <name>heme c</name>
        <dbReference type="ChEBI" id="CHEBI:61717"/>
    </ligand>
</feature>
<feature type="binding site" description="axial binding residue" evidence="1">
    <location>
        <position position="86"/>
    </location>
    <ligand>
        <name>heme b</name>
        <dbReference type="ChEBI" id="CHEBI:60344"/>
        <label>2</label>
    </ligand>
    <ligandPart>
        <name>Fe</name>
        <dbReference type="ChEBI" id="CHEBI:18248"/>
    </ligandPart>
</feature>
<feature type="binding site" description="axial binding residue" evidence="1">
    <location>
        <position position="100"/>
    </location>
    <ligand>
        <name>heme b</name>
        <dbReference type="ChEBI" id="CHEBI:60344"/>
        <label>1</label>
    </ligand>
    <ligandPart>
        <name>Fe</name>
        <dbReference type="ChEBI" id="CHEBI:18248"/>
    </ligandPart>
</feature>
<feature type="binding site" description="axial binding residue" evidence="1">
    <location>
        <position position="187"/>
    </location>
    <ligand>
        <name>heme b</name>
        <dbReference type="ChEBI" id="CHEBI:60344"/>
        <label>2</label>
    </ligand>
    <ligandPart>
        <name>Fe</name>
        <dbReference type="ChEBI" id="CHEBI:18248"/>
    </ligandPart>
</feature>
<feature type="binding site" description="axial binding residue" evidence="1">
    <location>
        <position position="202"/>
    </location>
    <ligand>
        <name>heme b</name>
        <dbReference type="ChEBI" id="CHEBI:60344"/>
        <label>1</label>
    </ligand>
    <ligandPart>
        <name>Fe</name>
        <dbReference type="ChEBI" id="CHEBI:18248"/>
    </ligandPart>
</feature>
<protein>
    <recommendedName>
        <fullName evidence="1">Cytochrome b6</fullName>
    </recommendedName>
</protein>
<gene>
    <name evidence="1" type="primary">petB</name>
</gene>
<reference key="1">
    <citation type="journal article" date="2003" name="Mol. Biol. Evol.">
        <title>Analysis of the Amborella trichopoda chloroplast genome sequence suggests that Amborella is not a basal angiosperm.</title>
        <authorList>
            <person name="Goremykin V.V."/>
            <person name="Hirsch-Ernst K.I."/>
            <person name="Wolfl S."/>
            <person name="Hellwig F.H."/>
        </authorList>
    </citation>
    <scope>NUCLEOTIDE SEQUENCE [LARGE SCALE GENOMIC DNA]</scope>
</reference>
<accession>Q70XX8</accession>
<geneLocation type="chloroplast"/>